<reference key="1">
    <citation type="journal article" date="1984" name="J. Bacteriol.">
        <title>Cloning of the neutral protease gene of Bacillus subtilis and the use of the cloned gene to create an in vitro-derived deletion mutation.</title>
        <authorList>
            <person name="Yang M.Y."/>
            <person name="Ferrari E."/>
            <person name="Henner D.J."/>
        </authorList>
    </citation>
    <scope>NUCLEOTIDE SEQUENCE [GENOMIC DNA]</scope>
</reference>
<reference key="2">
    <citation type="journal article" date="1996" name="Microbiology">
        <title>The ampS-nprE (124 degrees-127 degrees) region of the Bacillus subtilis 168 chromosome: sequencing of a 27 kb segment and identification of several genes in the area.</title>
        <authorList>
            <person name="Winters P."/>
            <person name="Caldwell R.M."/>
            <person name="Enfield L."/>
            <person name="Ferrari E."/>
        </authorList>
    </citation>
    <scope>NUCLEOTIDE SEQUENCE [GENOMIC DNA]</scope>
    <source>
        <strain>168</strain>
    </source>
</reference>
<reference key="3">
    <citation type="submission" date="1995-07" db="EMBL/GenBank/DDBJ databases">
        <authorList>
            <person name="Lee S."/>
            <person name="Yoon K."/>
            <person name="Nam H."/>
            <person name="Chae K."/>
        </authorList>
    </citation>
    <scope>NUCLEOTIDE SEQUENCE [GENOMIC DNA]</scope>
    <source>
        <strain>NS15-4</strain>
    </source>
</reference>
<reference key="4">
    <citation type="journal article" date="1997" name="Nature">
        <title>The complete genome sequence of the Gram-positive bacterium Bacillus subtilis.</title>
        <authorList>
            <person name="Kunst F."/>
            <person name="Ogasawara N."/>
            <person name="Moszer I."/>
            <person name="Albertini A.M."/>
            <person name="Alloni G."/>
            <person name="Azevedo V."/>
            <person name="Bertero M.G."/>
            <person name="Bessieres P."/>
            <person name="Bolotin A."/>
            <person name="Borchert S."/>
            <person name="Borriss R."/>
            <person name="Boursier L."/>
            <person name="Brans A."/>
            <person name="Braun M."/>
            <person name="Brignell S.C."/>
            <person name="Bron S."/>
            <person name="Brouillet S."/>
            <person name="Bruschi C.V."/>
            <person name="Caldwell B."/>
            <person name="Capuano V."/>
            <person name="Carter N.M."/>
            <person name="Choi S.-K."/>
            <person name="Codani J.-J."/>
            <person name="Connerton I.F."/>
            <person name="Cummings N.J."/>
            <person name="Daniel R.A."/>
            <person name="Denizot F."/>
            <person name="Devine K.M."/>
            <person name="Duesterhoeft A."/>
            <person name="Ehrlich S.D."/>
            <person name="Emmerson P.T."/>
            <person name="Entian K.-D."/>
            <person name="Errington J."/>
            <person name="Fabret C."/>
            <person name="Ferrari E."/>
            <person name="Foulger D."/>
            <person name="Fritz C."/>
            <person name="Fujita M."/>
            <person name="Fujita Y."/>
            <person name="Fuma S."/>
            <person name="Galizzi A."/>
            <person name="Galleron N."/>
            <person name="Ghim S.-Y."/>
            <person name="Glaser P."/>
            <person name="Goffeau A."/>
            <person name="Golightly E.J."/>
            <person name="Grandi G."/>
            <person name="Guiseppi G."/>
            <person name="Guy B.J."/>
            <person name="Haga K."/>
            <person name="Haiech J."/>
            <person name="Harwood C.R."/>
            <person name="Henaut A."/>
            <person name="Hilbert H."/>
            <person name="Holsappel S."/>
            <person name="Hosono S."/>
            <person name="Hullo M.-F."/>
            <person name="Itaya M."/>
            <person name="Jones L.-M."/>
            <person name="Joris B."/>
            <person name="Karamata D."/>
            <person name="Kasahara Y."/>
            <person name="Klaerr-Blanchard M."/>
            <person name="Klein C."/>
            <person name="Kobayashi Y."/>
            <person name="Koetter P."/>
            <person name="Koningstein G."/>
            <person name="Krogh S."/>
            <person name="Kumano M."/>
            <person name="Kurita K."/>
            <person name="Lapidus A."/>
            <person name="Lardinois S."/>
            <person name="Lauber J."/>
            <person name="Lazarevic V."/>
            <person name="Lee S.-M."/>
            <person name="Levine A."/>
            <person name="Liu H."/>
            <person name="Masuda S."/>
            <person name="Mauel C."/>
            <person name="Medigue C."/>
            <person name="Medina N."/>
            <person name="Mellado R.P."/>
            <person name="Mizuno M."/>
            <person name="Moestl D."/>
            <person name="Nakai S."/>
            <person name="Noback M."/>
            <person name="Noone D."/>
            <person name="O'Reilly M."/>
            <person name="Ogawa K."/>
            <person name="Ogiwara A."/>
            <person name="Oudega B."/>
            <person name="Park S.-H."/>
            <person name="Parro V."/>
            <person name="Pohl T.M."/>
            <person name="Portetelle D."/>
            <person name="Porwollik S."/>
            <person name="Prescott A.M."/>
            <person name="Presecan E."/>
            <person name="Pujic P."/>
            <person name="Purnelle B."/>
            <person name="Rapoport G."/>
            <person name="Rey M."/>
            <person name="Reynolds S."/>
            <person name="Rieger M."/>
            <person name="Rivolta C."/>
            <person name="Rocha E."/>
            <person name="Roche B."/>
            <person name="Rose M."/>
            <person name="Sadaie Y."/>
            <person name="Sato T."/>
            <person name="Scanlan E."/>
            <person name="Schleich S."/>
            <person name="Schroeter R."/>
            <person name="Scoffone F."/>
            <person name="Sekiguchi J."/>
            <person name="Sekowska A."/>
            <person name="Seror S.J."/>
            <person name="Serror P."/>
            <person name="Shin B.-S."/>
            <person name="Soldo B."/>
            <person name="Sorokin A."/>
            <person name="Tacconi E."/>
            <person name="Takagi T."/>
            <person name="Takahashi H."/>
            <person name="Takemaru K."/>
            <person name="Takeuchi M."/>
            <person name="Tamakoshi A."/>
            <person name="Tanaka T."/>
            <person name="Terpstra P."/>
            <person name="Tognoni A."/>
            <person name="Tosato V."/>
            <person name="Uchiyama S."/>
            <person name="Vandenbol M."/>
            <person name="Vannier F."/>
            <person name="Vassarotti A."/>
            <person name="Viari A."/>
            <person name="Wambutt R."/>
            <person name="Wedler E."/>
            <person name="Wedler H."/>
            <person name="Weitzenegger T."/>
            <person name="Winters P."/>
            <person name="Wipat A."/>
            <person name="Yamamoto H."/>
            <person name="Yamane K."/>
            <person name="Yasumoto K."/>
            <person name="Yata K."/>
            <person name="Yoshida K."/>
            <person name="Yoshikawa H.-F."/>
            <person name="Zumstein E."/>
            <person name="Yoshikawa H."/>
            <person name="Danchin A."/>
        </authorList>
    </citation>
    <scope>NUCLEOTIDE SEQUENCE [LARGE SCALE GENOMIC DNA]</scope>
    <source>
        <strain>168</strain>
    </source>
</reference>
<reference key="5">
    <citation type="submission" date="1997-06" db="EMBL/GenBank/DDBJ databases">
        <authorList>
            <person name="Purnell B."/>
            <person name="Presecan E."/>
            <person name="Glaser P."/>
            <person name="Richou A."/>
            <person name="Danchin A."/>
            <person name="Goffeau A."/>
        </authorList>
    </citation>
    <scope>NUCLEOTIDE SEQUENCE [GENOMIC DNA] OF 1-158</scope>
    <source>
        <strain>168</strain>
    </source>
</reference>
<comment type="function">
    <text>Extracellular zinc metalloprotease.</text>
</comment>
<comment type="catalytic activity">
    <reaction>
        <text>Similar, but not identical, to that of thermolysin.</text>
        <dbReference type="EC" id="3.4.24.28"/>
    </reaction>
</comment>
<comment type="cofactor">
    <cofactor evidence="4">
        <name>Ca(2+)</name>
        <dbReference type="ChEBI" id="CHEBI:29108"/>
    </cofactor>
    <text evidence="4">Binds 4 Ca(2+) ions per subunit.</text>
</comment>
<comment type="cofactor">
    <cofactor evidence="1">
        <name>Zn(2+)</name>
        <dbReference type="ChEBI" id="CHEBI:29105"/>
    </cofactor>
    <text evidence="1">Binds 1 zinc ion per subunit.</text>
</comment>
<comment type="biophysicochemical properties">
    <temperatureDependence>
        <text>Thermolabile.</text>
    </temperatureDependence>
</comment>
<comment type="subcellular location">
    <subcellularLocation>
        <location evidence="1">Secreted</location>
    </subcellularLocation>
</comment>
<comment type="similarity">
    <text evidence="4">Belongs to the peptidase M4 family.</text>
</comment>
<keyword id="KW-0106">Calcium</keyword>
<keyword id="KW-0378">Hydrolase</keyword>
<keyword id="KW-0479">Metal-binding</keyword>
<keyword id="KW-0482">Metalloprotease</keyword>
<keyword id="KW-0645">Protease</keyword>
<keyword id="KW-1185">Reference proteome</keyword>
<keyword id="KW-0964">Secreted</keyword>
<keyword id="KW-0732">Signal</keyword>
<keyword id="KW-0862">Zinc</keyword>
<keyword id="KW-0865">Zymogen</keyword>
<feature type="signal peptide" evidence="2">
    <location>
        <begin position="1"/>
        <end position="27"/>
    </location>
</feature>
<feature type="propeptide" id="PRO_0000028606" description="Activation peptide" evidence="1">
    <location>
        <begin position="28"/>
        <end position="221"/>
    </location>
</feature>
<feature type="chain" id="PRO_0000028607" description="Bacillolysin">
    <location>
        <begin position="222"/>
        <end position="521"/>
    </location>
</feature>
<feature type="active site" evidence="3">
    <location>
        <position position="365"/>
    </location>
</feature>
<feature type="active site" description="Proton donor" evidence="3">
    <location>
        <position position="449"/>
    </location>
</feature>
<feature type="binding site" evidence="2">
    <location>
        <position position="360"/>
    </location>
    <ligand>
        <name>Ca(2+)</name>
        <dbReference type="ChEBI" id="CHEBI:29108"/>
        <label>1</label>
    </ligand>
</feature>
<feature type="binding site" evidence="3">
    <location>
        <position position="364"/>
    </location>
    <ligand>
        <name>Zn(2+)</name>
        <dbReference type="ChEBI" id="CHEBI:29105"/>
        <note>catalytic</note>
    </ligand>
</feature>
<feature type="binding site" evidence="3">
    <location>
        <position position="368"/>
    </location>
    <ligand>
        <name>Zn(2+)</name>
        <dbReference type="ChEBI" id="CHEBI:29105"/>
        <note>catalytic</note>
    </ligand>
</feature>
<feature type="binding site" evidence="3">
    <location>
        <position position="388"/>
    </location>
    <ligand>
        <name>Zn(2+)</name>
        <dbReference type="ChEBI" id="CHEBI:29105"/>
        <note>catalytic</note>
    </ligand>
</feature>
<feature type="binding site" evidence="2">
    <location>
        <position position="399"/>
    </location>
    <ligand>
        <name>Ca(2+)</name>
        <dbReference type="ChEBI" id="CHEBI:29108"/>
        <label>1</label>
    </ligand>
</feature>
<feature type="binding site" evidence="2">
    <location>
        <position position="399"/>
    </location>
    <ligand>
        <name>Ca(2+)</name>
        <dbReference type="ChEBI" id="CHEBI:29108"/>
        <label>2</label>
    </ligand>
</feature>
<feature type="binding site" evidence="2">
    <location>
        <position position="402"/>
    </location>
    <ligand>
        <name>Ca(2+)</name>
        <dbReference type="ChEBI" id="CHEBI:29108"/>
        <label>1</label>
    </ligand>
</feature>
<feature type="binding site" evidence="2">
    <location>
        <position position="402"/>
    </location>
    <ligand>
        <name>Ca(2+)</name>
        <dbReference type="ChEBI" id="CHEBI:29108"/>
        <label>2</label>
    </ligand>
</feature>
<feature type="binding site" evidence="2">
    <location>
        <position position="404"/>
    </location>
    <ligand>
        <name>Ca(2+)</name>
        <dbReference type="ChEBI" id="CHEBI:29108"/>
        <label>1</label>
    </ligand>
</feature>
<feature type="binding site" evidence="2">
    <location>
        <position position="407"/>
    </location>
    <ligand>
        <name>Ca(2+)</name>
        <dbReference type="ChEBI" id="CHEBI:29108"/>
        <label>1</label>
    </ligand>
</feature>
<feature type="binding site" evidence="2">
    <location>
        <position position="407"/>
    </location>
    <ligand>
        <name>Ca(2+)</name>
        <dbReference type="ChEBI" id="CHEBI:29108"/>
        <label>2</label>
    </ligand>
</feature>
<feature type="sequence conflict" description="In Ref. 1 and 2." evidence="4" ref="1 2">
    <original>A</original>
    <variation>R</variation>
    <location>
        <position position="10"/>
    </location>
</feature>
<feature type="sequence conflict" description="In Ref. 1 and 2." evidence="4" ref="1 2">
    <original>NA</original>
    <variation>KP</variation>
    <location>
        <begin position="44"/>
        <end position="45"/>
    </location>
</feature>
<feature type="sequence conflict" description="In Ref. 1 and 2." evidence="4" ref="1 2">
    <original>RL</original>
    <variation>SV</variation>
    <location>
        <begin position="77"/>
        <end position="78"/>
    </location>
</feature>
<proteinExistence type="evidence at protein level"/>
<gene>
    <name type="primary">nprE</name>
    <name type="ordered locus">BSU14700</name>
</gene>
<sequence length="521" mass="56522">MGLGKKLSVAVAASFMSLSISLPGVQAAEGHQLKENQTNFLSKNAIAQSELSAPNDKAVKQFLKKNSNIFKGDPSKRLKLVESTTDALGYKHFRYAPVVNGVPIKDSQVIVHVDKSDNVYAVNGELHNQSAAKTDNSQKVSSEKALALAFKAIGKSPDAVSNGAAKNSNKAELKAIETKDGSYRLAYDVTIRYVEPEPANWEVLVDAETGSILKQQNKVEHAAATGSGTTLKGATVPLNISYEGGKYVLRDLSKPTGTQIITYDLQNRQSRLPGTLVSSTTKTFTSSSQRAAVDAHYNLGKVYDYFYSNFKRNSYDNKGSKIVSSVHYGTQYNNAAWTGDQMIYGDGDGSFFSPLSGSLDVTAHEMTHGVTQETANLIYENQPGALNESFSDVFGYFNDTEDWDIGEDITVSQPALRSLSNPTKYNQPDNYANYRNLPNTDEGDYGGVHTNSGIPNKAAYNTITKLGVSKSQQIYYRALTTYLTPSSTFKDAKAALIQSARDLYGSTDAAKVEAAWNAVGL</sequence>
<dbReference type="EC" id="3.4.24.28"/>
<dbReference type="EMBL" id="K01985">
    <property type="protein sequence ID" value="AAA22627.1"/>
    <property type="molecule type" value="Genomic_DNA"/>
</dbReference>
<dbReference type="EMBL" id="AF012285">
    <property type="protein sequence ID" value="AAC24942.1"/>
    <property type="molecule type" value="Genomic_DNA"/>
</dbReference>
<dbReference type="EMBL" id="U30932">
    <property type="protein sequence ID" value="AAA82609.1"/>
    <property type="molecule type" value="Genomic_DNA"/>
</dbReference>
<dbReference type="EMBL" id="AL009126">
    <property type="protein sequence ID" value="CAB13343.1"/>
    <property type="molecule type" value="Genomic_DNA"/>
</dbReference>
<dbReference type="EMBL" id="Z97025">
    <property type="protein sequence ID" value="CAB09705.1"/>
    <property type="molecule type" value="Genomic_DNA"/>
</dbReference>
<dbReference type="PIR" id="A25414">
    <property type="entry name" value="HYBS"/>
</dbReference>
<dbReference type="PIR" id="JQ2129">
    <property type="entry name" value="JQ2129"/>
</dbReference>
<dbReference type="RefSeq" id="NP_389353.1">
    <property type="nucleotide sequence ID" value="NC_000964.3"/>
</dbReference>
<dbReference type="RefSeq" id="WP_003245026.1">
    <property type="nucleotide sequence ID" value="NZ_OZ025638.1"/>
</dbReference>
<dbReference type="SMR" id="P68736"/>
<dbReference type="FunCoup" id="P68736">
    <property type="interactions" value="2"/>
</dbReference>
<dbReference type="STRING" id="224308.BSU14700"/>
<dbReference type="MEROPS" id="M04.014"/>
<dbReference type="PaxDb" id="224308-BSU14700"/>
<dbReference type="EnsemblBacteria" id="CAB13343">
    <property type="protein sequence ID" value="CAB13343"/>
    <property type="gene ID" value="BSU_14700"/>
</dbReference>
<dbReference type="GeneID" id="935981"/>
<dbReference type="KEGG" id="bsu:BSU14700"/>
<dbReference type="PATRIC" id="fig|224308.179.peg.1604"/>
<dbReference type="eggNOG" id="COG3227">
    <property type="taxonomic scope" value="Bacteria"/>
</dbReference>
<dbReference type="InParanoid" id="P68736"/>
<dbReference type="OrthoDB" id="291295at2"/>
<dbReference type="PhylomeDB" id="P68736"/>
<dbReference type="BioCyc" id="BSUB:BSU14700-MONOMER"/>
<dbReference type="SABIO-RK" id="P68736"/>
<dbReference type="Proteomes" id="UP000001570">
    <property type="component" value="Chromosome"/>
</dbReference>
<dbReference type="GO" id="GO:0005576">
    <property type="term" value="C:extracellular region"/>
    <property type="evidence" value="ECO:0007669"/>
    <property type="project" value="UniProtKB-SubCell"/>
</dbReference>
<dbReference type="GO" id="GO:0046872">
    <property type="term" value="F:metal ion binding"/>
    <property type="evidence" value="ECO:0007669"/>
    <property type="project" value="UniProtKB-KW"/>
</dbReference>
<dbReference type="GO" id="GO:0004222">
    <property type="term" value="F:metalloendopeptidase activity"/>
    <property type="evidence" value="ECO:0007669"/>
    <property type="project" value="InterPro"/>
</dbReference>
<dbReference type="GO" id="GO:0006508">
    <property type="term" value="P:proteolysis"/>
    <property type="evidence" value="ECO:0000318"/>
    <property type="project" value="GO_Central"/>
</dbReference>
<dbReference type="CDD" id="cd09597">
    <property type="entry name" value="M4_TLP"/>
    <property type="match status" value="1"/>
</dbReference>
<dbReference type="Gene3D" id="3.10.170.10">
    <property type="match status" value="1"/>
</dbReference>
<dbReference type="Gene3D" id="3.10.450.40">
    <property type="match status" value="1"/>
</dbReference>
<dbReference type="Gene3D" id="3.10.450.490">
    <property type="match status" value="1"/>
</dbReference>
<dbReference type="Gene3D" id="1.10.390.10">
    <property type="entry name" value="Neutral Protease Domain 2"/>
    <property type="match status" value="1"/>
</dbReference>
<dbReference type="InterPro" id="IPR011096">
    <property type="entry name" value="FTP_domain"/>
</dbReference>
<dbReference type="InterPro" id="IPR025711">
    <property type="entry name" value="PepSY"/>
</dbReference>
<dbReference type="InterPro" id="IPR023612">
    <property type="entry name" value="Peptidase_M4"/>
</dbReference>
<dbReference type="InterPro" id="IPR027268">
    <property type="entry name" value="Peptidase_M4/M1_CTD_sf"/>
</dbReference>
<dbReference type="InterPro" id="IPR001570">
    <property type="entry name" value="Peptidase_M4_C_domain"/>
</dbReference>
<dbReference type="InterPro" id="IPR013856">
    <property type="entry name" value="Peptidase_M4_domain"/>
</dbReference>
<dbReference type="InterPro" id="IPR050728">
    <property type="entry name" value="Zinc_Metalloprotease_M4"/>
</dbReference>
<dbReference type="PANTHER" id="PTHR33794">
    <property type="entry name" value="BACILLOLYSIN"/>
    <property type="match status" value="1"/>
</dbReference>
<dbReference type="PANTHER" id="PTHR33794:SF1">
    <property type="entry name" value="BACILLOLYSIN"/>
    <property type="match status" value="1"/>
</dbReference>
<dbReference type="Pfam" id="PF07504">
    <property type="entry name" value="FTP"/>
    <property type="match status" value="1"/>
</dbReference>
<dbReference type="Pfam" id="PF03413">
    <property type="entry name" value="PepSY"/>
    <property type="match status" value="1"/>
</dbReference>
<dbReference type="Pfam" id="PF01447">
    <property type="entry name" value="Peptidase_M4"/>
    <property type="match status" value="1"/>
</dbReference>
<dbReference type="Pfam" id="PF02868">
    <property type="entry name" value="Peptidase_M4_C"/>
    <property type="match status" value="1"/>
</dbReference>
<dbReference type="PRINTS" id="PR00730">
    <property type="entry name" value="THERMOLYSIN"/>
</dbReference>
<dbReference type="SUPFAM" id="SSF55486">
    <property type="entry name" value="Metalloproteases ('zincins'), catalytic domain"/>
    <property type="match status" value="1"/>
</dbReference>
<dbReference type="PROSITE" id="PS00142">
    <property type="entry name" value="ZINC_PROTEASE"/>
    <property type="match status" value="1"/>
</dbReference>
<organism>
    <name type="scientific">Bacillus subtilis (strain 168)</name>
    <dbReference type="NCBI Taxonomy" id="224308"/>
    <lineage>
        <taxon>Bacteria</taxon>
        <taxon>Bacillati</taxon>
        <taxon>Bacillota</taxon>
        <taxon>Bacilli</taxon>
        <taxon>Bacillales</taxon>
        <taxon>Bacillaceae</taxon>
        <taxon>Bacillus</taxon>
    </lineage>
</organism>
<accession>P68736</accession>
<accession>P06142</accession>
<accession>P25268</accession>
<evidence type="ECO:0000250" key="1"/>
<evidence type="ECO:0000255" key="2"/>
<evidence type="ECO:0000255" key="3">
    <source>
        <dbReference type="PROSITE-ProRule" id="PRU10095"/>
    </source>
</evidence>
<evidence type="ECO:0000305" key="4"/>
<name>NPRE_BACSU</name>
<protein>
    <recommendedName>
        <fullName>Bacillolysin</fullName>
        <ecNumber>3.4.24.28</ecNumber>
    </recommendedName>
    <alternativeName>
        <fullName>Neutral protease NprE</fullName>
    </alternativeName>
</protein>